<proteinExistence type="inferred from homology"/>
<evidence type="ECO:0000250" key="1"/>
<evidence type="ECO:0000255" key="2">
    <source>
        <dbReference type="HAMAP-Rule" id="MF_01491"/>
    </source>
</evidence>
<evidence type="ECO:0000305" key="3"/>
<protein>
    <recommendedName>
        <fullName evidence="2">Ribonuclease J 2</fullName>
        <shortName evidence="2">RNase J2</shortName>
        <ecNumber evidence="2">3.1.-.-</ecNumber>
    </recommendedName>
</protein>
<name>RNJ2_STAAB</name>
<reference key="1">
    <citation type="journal article" date="2007" name="PLoS ONE">
        <title>Molecular correlates of host specialization in Staphylococcus aureus.</title>
        <authorList>
            <person name="Herron-Olson L."/>
            <person name="Fitzgerald J.R."/>
            <person name="Musser J.M."/>
            <person name="Kapur V."/>
        </authorList>
    </citation>
    <scope>NUCLEOTIDE SEQUENCE [LARGE SCALE GENOMIC DNA]</scope>
    <source>
        <strain>bovine RF122 / ET3-1</strain>
    </source>
</reference>
<gene>
    <name evidence="2" type="primary">rnj2</name>
    <name type="ordered locus">SAB1137</name>
</gene>
<comment type="function">
    <text evidence="1">An RNase that has 5'-3' exonuclease and possibly endoonuclease activity. Involved in maturation of rRNA and in some organisms also mRNA maturation and/or decay (By similarity).</text>
</comment>
<comment type="cofactor">
    <cofactor evidence="2">
        <name>Zn(2+)</name>
        <dbReference type="ChEBI" id="CHEBI:29105"/>
    </cofactor>
    <text evidence="2">Binds up to 2 Zn(2+) ions per subunit. It is not clear if Zn(2+) or Mg(2+) is physiologically important.</text>
</comment>
<comment type="subunit">
    <text evidence="2">Homodimer, may be a subunit of the RNA degradosome.</text>
</comment>
<comment type="subcellular location">
    <subcellularLocation>
        <location evidence="2">Cytoplasm</location>
    </subcellularLocation>
</comment>
<comment type="similarity">
    <text evidence="2">Belongs to the metallo-beta-lactamase superfamily. RNA-metabolizing metallo-beta-lactamase-like family. Bacterial RNase J subfamily.</text>
</comment>
<comment type="sequence caution" evidence="3">
    <conflict type="frameshift">
        <sequence resource="EMBL-CDS" id="CAI80826"/>
    </conflict>
</comment>
<accession>Q2YXP1</accession>
<keyword id="KW-0963">Cytoplasm</keyword>
<keyword id="KW-0255">Endonuclease</keyword>
<keyword id="KW-0269">Exonuclease</keyword>
<keyword id="KW-0378">Hydrolase</keyword>
<keyword id="KW-0479">Metal-binding</keyword>
<keyword id="KW-0540">Nuclease</keyword>
<keyword id="KW-0694">RNA-binding</keyword>
<keyword id="KW-0698">rRNA processing</keyword>
<keyword id="KW-0862">Zinc</keyword>
<sequence>MSLIKKKNKDIRIIPLGGVGEIAKNMYIVEVDDEMFMLDAGLMFPEDEMLGIDIVIPDISYVLENKDKLKGIFLTHGHEHAIGAVSYVLEQLDAPVYGSKLTIALIKENMKARNIDKKVRYYTVNNDSIMRFKNVNISFFNTTHSIPDSLGVCIHTSYGAIVYTGEFKFDQSLHGHYAPDIKRMAEIGEEGVFVLISDSTEAEKPGYNTPENVIEHHMYDAFAKVRGRLIVSCYASNFIRIQQVLNIASKLNRKVSFLGRSLESSFNIARKMGYFDIPKDLLIPITEVDNYPKNEVIIIATGMQGEPVEALSQMAQHKHKIMNIEEGDSVFLAITASANMEVIIANTLNELVRAGAHIIPNNKKIHASSHGCMEELKMMINIMKPEYFIPVQGEFKMQIAHAKLAAEAGVAPEKIFLVEKGDVINYNGKDMILNEKVNSGNILIDGIGIGDVGNIVLRDRHLLAEDGIFIAVVTLDPKNRRIAAGPEIQSRGFVYVRESEDLLREAEEKVREIVEAGLQEKRIEWSEIKQNMRDQISKLLFESTKRRPMIIPVISEI</sequence>
<feature type="chain" id="PRO_0000286838" description="Ribonuclease J 2">
    <location>
        <begin position="1"/>
        <end position="557"/>
    </location>
</feature>
<feature type="binding site" evidence="2">
    <location>
        <position position="76"/>
    </location>
    <ligand>
        <name>Zn(2+)</name>
        <dbReference type="ChEBI" id="CHEBI:29105"/>
        <note>catalytic</note>
    </ligand>
</feature>
<feature type="binding site" evidence="2">
    <location>
        <position position="78"/>
    </location>
    <ligand>
        <name>Zn(2+)</name>
        <dbReference type="ChEBI" id="CHEBI:29105"/>
        <note>catalytic</note>
    </ligand>
</feature>
<feature type="binding site" evidence="2">
    <location>
        <position position="144"/>
    </location>
    <ligand>
        <name>Zn(2+)</name>
        <dbReference type="ChEBI" id="CHEBI:29105"/>
        <note>catalytic</note>
    </ligand>
</feature>
<feature type="binding site" evidence="2">
    <location>
        <position position="166"/>
    </location>
    <ligand>
        <name>Zn(2+)</name>
        <dbReference type="ChEBI" id="CHEBI:29105"/>
        <note>catalytic</note>
    </ligand>
</feature>
<feature type="binding site" evidence="2">
    <location>
        <begin position="366"/>
        <end position="370"/>
    </location>
    <ligand>
        <name>substrate</name>
    </ligand>
</feature>
<organism>
    <name type="scientific">Staphylococcus aureus (strain bovine RF122 / ET3-1)</name>
    <dbReference type="NCBI Taxonomy" id="273036"/>
    <lineage>
        <taxon>Bacteria</taxon>
        <taxon>Bacillati</taxon>
        <taxon>Bacillota</taxon>
        <taxon>Bacilli</taxon>
        <taxon>Bacillales</taxon>
        <taxon>Staphylococcaceae</taxon>
        <taxon>Staphylococcus</taxon>
    </lineage>
</organism>
<dbReference type="EC" id="3.1.-.-" evidence="2"/>
<dbReference type="EMBL" id="AJ938182">
    <property type="protein sequence ID" value="CAI80826.1"/>
    <property type="status" value="ALT_FRAME"/>
    <property type="molecule type" value="Genomic_DNA"/>
</dbReference>
<dbReference type="SMR" id="Q2YXP1"/>
<dbReference type="KEGG" id="sab:SAB1137"/>
<dbReference type="HOGENOM" id="CLU_008727_3_1_9"/>
<dbReference type="GO" id="GO:0005737">
    <property type="term" value="C:cytoplasm"/>
    <property type="evidence" value="ECO:0007669"/>
    <property type="project" value="UniProtKB-SubCell"/>
</dbReference>
<dbReference type="GO" id="GO:0004534">
    <property type="term" value="F:5'-3' RNA exonuclease activity"/>
    <property type="evidence" value="ECO:0007669"/>
    <property type="project" value="UniProtKB-UniRule"/>
</dbReference>
<dbReference type="GO" id="GO:0003723">
    <property type="term" value="F:RNA binding"/>
    <property type="evidence" value="ECO:0007669"/>
    <property type="project" value="UniProtKB-UniRule"/>
</dbReference>
<dbReference type="GO" id="GO:0004521">
    <property type="term" value="F:RNA endonuclease activity"/>
    <property type="evidence" value="ECO:0007669"/>
    <property type="project" value="UniProtKB-UniRule"/>
</dbReference>
<dbReference type="GO" id="GO:0008270">
    <property type="term" value="F:zinc ion binding"/>
    <property type="evidence" value="ECO:0007669"/>
    <property type="project" value="InterPro"/>
</dbReference>
<dbReference type="GO" id="GO:0006364">
    <property type="term" value="P:rRNA processing"/>
    <property type="evidence" value="ECO:0007669"/>
    <property type="project" value="UniProtKB-UniRule"/>
</dbReference>
<dbReference type="CDD" id="cd07714">
    <property type="entry name" value="RNaseJ_MBL-fold"/>
    <property type="match status" value="1"/>
</dbReference>
<dbReference type="FunFam" id="3.10.20.580:FF:000001">
    <property type="entry name" value="Ribonuclease J"/>
    <property type="match status" value="1"/>
</dbReference>
<dbReference type="FunFam" id="3.40.50.10710:FF:000002">
    <property type="entry name" value="Ribonuclease J 2"/>
    <property type="match status" value="1"/>
</dbReference>
<dbReference type="Gene3D" id="3.10.20.580">
    <property type="match status" value="1"/>
</dbReference>
<dbReference type="Gene3D" id="3.40.50.10710">
    <property type="entry name" value="Metallo-hydrolase/oxidoreductase"/>
    <property type="match status" value="1"/>
</dbReference>
<dbReference type="Gene3D" id="3.60.15.10">
    <property type="entry name" value="Ribonuclease Z/Hydroxyacylglutathione hydrolase-like"/>
    <property type="match status" value="1"/>
</dbReference>
<dbReference type="HAMAP" id="MF_01491">
    <property type="entry name" value="RNase_J_bact"/>
    <property type="match status" value="1"/>
</dbReference>
<dbReference type="InterPro" id="IPR001279">
    <property type="entry name" value="Metallo-B-lactamas"/>
</dbReference>
<dbReference type="InterPro" id="IPR036866">
    <property type="entry name" value="RibonucZ/Hydroxyglut_hydro"/>
</dbReference>
<dbReference type="InterPro" id="IPR011108">
    <property type="entry name" value="RMMBL"/>
</dbReference>
<dbReference type="InterPro" id="IPR004613">
    <property type="entry name" value="RNase_J"/>
</dbReference>
<dbReference type="InterPro" id="IPR042173">
    <property type="entry name" value="RNase_J_2"/>
</dbReference>
<dbReference type="InterPro" id="IPR055132">
    <property type="entry name" value="RNase_J_b_CASP"/>
</dbReference>
<dbReference type="InterPro" id="IPR030854">
    <property type="entry name" value="RNase_J_bac"/>
</dbReference>
<dbReference type="InterPro" id="IPR041636">
    <property type="entry name" value="RNase_J_C"/>
</dbReference>
<dbReference type="NCBIfam" id="TIGR00649">
    <property type="entry name" value="MG423"/>
    <property type="match status" value="1"/>
</dbReference>
<dbReference type="PANTHER" id="PTHR43694">
    <property type="entry name" value="RIBONUCLEASE J"/>
    <property type="match status" value="1"/>
</dbReference>
<dbReference type="PANTHER" id="PTHR43694:SF4">
    <property type="entry name" value="RIBONUCLEASE J 2"/>
    <property type="match status" value="1"/>
</dbReference>
<dbReference type="Pfam" id="PF00753">
    <property type="entry name" value="Lactamase_B"/>
    <property type="match status" value="1"/>
</dbReference>
<dbReference type="Pfam" id="PF07521">
    <property type="entry name" value="RMMBL"/>
    <property type="match status" value="1"/>
</dbReference>
<dbReference type="Pfam" id="PF22505">
    <property type="entry name" value="RNase_J_b_CASP"/>
    <property type="match status" value="1"/>
</dbReference>
<dbReference type="Pfam" id="PF17770">
    <property type="entry name" value="RNase_J_C"/>
    <property type="match status" value="1"/>
</dbReference>
<dbReference type="PIRSF" id="PIRSF004803">
    <property type="entry name" value="RnjA"/>
    <property type="match status" value="1"/>
</dbReference>
<dbReference type="SMART" id="SM00849">
    <property type="entry name" value="Lactamase_B"/>
    <property type="match status" value="1"/>
</dbReference>
<dbReference type="SUPFAM" id="SSF56281">
    <property type="entry name" value="Metallo-hydrolase/oxidoreductase"/>
    <property type="match status" value="1"/>
</dbReference>